<organism>
    <name type="scientific">Encephalitozoon cuniculi (strain GB-M1)</name>
    <name type="common">Microsporidian parasite</name>
    <dbReference type="NCBI Taxonomy" id="284813"/>
    <lineage>
        <taxon>Eukaryota</taxon>
        <taxon>Fungi</taxon>
        <taxon>Fungi incertae sedis</taxon>
        <taxon>Microsporidia</taxon>
        <taxon>Unikaryonidae</taxon>
        <taxon>Encephalitozoon</taxon>
    </lineage>
</organism>
<comment type="subcellular location">
    <subcellularLocation>
        <location evidence="1">Nucleus</location>
    </subcellularLocation>
</comment>
<comment type="sequence caution" evidence="2">
    <conflict type="erroneous initiation">
        <sequence resource="EMBL-CDS" id="DAA01299"/>
    </conflict>
    <text>Extended N-terminus.</text>
</comment>
<sequence length="151" mass="17671">MSKLPALVSLRMNEIRGIYIETNNRVVEEMDAVIDEFAKDVGSSPDISTNVRTYLEERIRYIREFVVDHIGFSISEFRTLYNPNGNESIKSRRFPKFITEALERSFEIDQYPSEAEKARLAKICKLSTKQINNWFTNKRNRTKGHEGGRQY</sequence>
<keyword id="KW-0238">DNA-binding</keyword>
<keyword id="KW-0371">Homeobox</keyword>
<keyword id="KW-0539">Nucleus</keyword>
<keyword id="KW-1185">Reference proteome</keyword>
<reference key="1">
    <citation type="journal article" date="2001" name="Nature">
        <title>Genome sequence and gene compaction of the eukaryote parasite Encephalitozoon cuniculi.</title>
        <authorList>
            <person name="Katinka M.D."/>
            <person name="Duprat S."/>
            <person name="Cornillot E."/>
            <person name="Metenier G."/>
            <person name="Thomarat F."/>
            <person name="Prensier G."/>
            <person name="Barbe V."/>
            <person name="Peyretaillade E."/>
            <person name="Brottier P."/>
            <person name="Wincker P."/>
            <person name="Delbac F."/>
            <person name="El Alaoui H."/>
            <person name="Peyret P."/>
            <person name="Saurin W."/>
            <person name="Gouy M."/>
            <person name="Weissenbach J."/>
            <person name="Vivares C.P."/>
        </authorList>
    </citation>
    <scope>NUCLEOTIDE SEQUENCE [LARGE SCALE GENOMIC DNA]</scope>
    <source>
        <strain>GB-M1</strain>
    </source>
</reference>
<reference key="2">
    <citation type="journal article" date="2009" name="BMC Genomics">
        <title>Identification of transcriptional signals in Encephalitozoon cuniculi widespread among Microsporidia phylum: support for accurate structural genome annotation.</title>
        <authorList>
            <person name="Peyretaillade E."/>
            <person name="Goncalves O."/>
            <person name="Terrat S."/>
            <person name="Dugat-Bony E."/>
            <person name="Wincker P."/>
            <person name="Cornman R.S."/>
            <person name="Evans J.D."/>
            <person name="Delbac F."/>
            <person name="Peyret P."/>
        </authorList>
    </citation>
    <scope>GENOME REANNOTATION</scope>
    <source>
        <strain>GB-M1</strain>
    </source>
</reference>
<reference key="3">
    <citation type="journal article" date="2003" name="Dev. Genes Evol.">
        <title>The homeobox genes of Encephalitozoon cuniculi (Microsporidia) reveal a putative mating-type locus.</title>
        <authorList>
            <person name="Buerglin T.R."/>
        </authorList>
    </citation>
    <scope>GENE NAME</scope>
</reference>
<evidence type="ECO:0000255" key="1">
    <source>
        <dbReference type="PROSITE-ProRule" id="PRU00108"/>
    </source>
</evidence>
<evidence type="ECO:0000305" key="2"/>
<feature type="chain" id="PRO_0000048910" description="Homeobox protein HD-1">
    <location>
        <begin position="1"/>
        <end position="151"/>
    </location>
</feature>
<feature type="DNA-binding region" description="Homeobox" evidence="1">
    <location>
        <begin position="87"/>
        <end position="146"/>
    </location>
</feature>
<accession>Q8SUB7</accession>
<accession>Q7SI93</accession>
<protein>
    <recommendedName>
        <fullName>Homeobox protein HD-1</fullName>
    </recommendedName>
    <alternativeName>
        <fullName>EcHD-1</fullName>
    </alternativeName>
</protein>
<name>HD1_ENCCU</name>
<proteinExistence type="inferred from homology"/>
<gene>
    <name type="primary">HD-1</name>
    <name type="ordered locus">ECU10_1470</name>
</gene>
<dbReference type="EMBL" id="AL590449">
    <property type="protein sequence ID" value="CAD25866.2"/>
    <property type="molecule type" value="Genomic_DNA"/>
</dbReference>
<dbReference type="EMBL" id="BK001336">
    <property type="protein sequence ID" value="DAA01299.1"/>
    <property type="status" value="ALT_INIT"/>
    <property type="molecule type" value="Genomic_DNA"/>
</dbReference>
<dbReference type="RefSeq" id="NP_586262.1">
    <property type="nucleotide sequence ID" value="NM_001042095.1"/>
</dbReference>
<dbReference type="SMR" id="Q8SUB7"/>
<dbReference type="STRING" id="284813.Q8SUB7"/>
<dbReference type="GeneID" id="859912"/>
<dbReference type="KEGG" id="ecu:ECU10_1470"/>
<dbReference type="VEuPathDB" id="MicrosporidiaDB:ECU10_1470"/>
<dbReference type="HOGENOM" id="CLU_145531_0_0_1"/>
<dbReference type="InParanoid" id="Q8SUB7"/>
<dbReference type="OrthoDB" id="10056939at2759"/>
<dbReference type="Proteomes" id="UP000000819">
    <property type="component" value="Chromosome X"/>
</dbReference>
<dbReference type="GO" id="GO:0005634">
    <property type="term" value="C:nucleus"/>
    <property type="evidence" value="ECO:0007669"/>
    <property type="project" value="UniProtKB-SubCell"/>
</dbReference>
<dbReference type="GO" id="GO:0003677">
    <property type="term" value="F:DNA binding"/>
    <property type="evidence" value="ECO:0007669"/>
    <property type="project" value="UniProtKB-KW"/>
</dbReference>
<dbReference type="GO" id="GO:0000981">
    <property type="term" value="F:DNA-binding transcription factor activity, RNA polymerase II-specific"/>
    <property type="evidence" value="ECO:0007669"/>
    <property type="project" value="InterPro"/>
</dbReference>
<dbReference type="CDD" id="cd00086">
    <property type="entry name" value="homeodomain"/>
    <property type="match status" value="1"/>
</dbReference>
<dbReference type="Gene3D" id="1.10.10.60">
    <property type="entry name" value="Homeodomain-like"/>
    <property type="match status" value="1"/>
</dbReference>
<dbReference type="InterPro" id="IPR001356">
    <property type="entry name" value="HD"/>
</dbReference>
<dbReference type="InterPro" id="IPR017970">
    <property type="entry name" value="Homeobox_CS"/>
</dbReference>
<dbReference type="InterPro" id="IPR009057">
    <property type="entry name" value="Homeodomain-like_sf"/>
</dbReference>
<dbReference type="Pfam" id="PF00046">
    <property type="entry name" value="Homeodomain"/>
    <property type="match status" value="1"/>
</dbReference>
<dbReference type="SMART" id="SM00389">
    <property type="entry name" value="HOX"/>
    <property type="match status" value="1"/>
</dbReference>
<dbReference type="SUPFAM" id="SSF46689">
    <property type="entry name" value="Homeodomain-like"/>
    <property type="match status" value="1"/>
</dbReference>
<dbReference type="PROSITE" id="PS00027">
    <property type="entry name" value="HOMEOBOX_1"/>
    <property type="match status" value="1"/>
</dbReference>
<dbReference type="PROSITE" id="PS50071">
    <property type="entry name" value="HOMEOBOX_2"/>
    <property type="match status" value="1"/>
</dbReference>